<proteinExistence type="evidence at protein level"/>
<sequence length="540" mass="61189">MTAEVKVEEKQVESEVVIAPAVVPEETTVKAVVEETKVEEDESKPEGVEKSASFKEESDFFADLKESEKKALSDLKSKLEEAIVDNTLLKTKKKESSPMKEKKEEVVKPEAEVEKKKEEAAEEKVEEEKKSEAVVTEEAPKAETVEAVVTEEIIPKEEVTTVVEKVEEETKEEEKKTEDVVTEEVKAETIEVEDEDESVDKDIELWGVPLLPSKGAESTDVILLKFLRARDFKVNEAFEMLKKTLKWRKQNKIDSILGEEFGEDLATAAYMNGVDRESHPVCYNVHSEELYQTIGSEKNREKFLRWRFQLMEKGIQKLNLKPGGVTSLLQIHDLKNAPGVSRTEIWVGIKKVIETLQDNYPEFVSRNIFINVPFWFYAMRAVLSPFLTQRTKSKFVVARPAKVRETLLKYIPADELPVQYGGFKTVDDTEFSNETVSEVVVKPGSSETIEIPAPETEGTLVWDIAVLGWEVNYKEEFVPTEEGAYTVIVQKVKKMGANEGPIRNSFKNSQAGKIVLTVDNVSGKKKKVLYRYRTKTESSS</sequence>
<gene>
    <name type="primary">PATL4</name>
    <name type="ordered locus">At1g30690</name>
    <name type="ORF">T5I8.14</name>
</gene>
<accession>Q94C59</accession>
<accession>Q9SA84</accession>
<reference key="1">
    <citation type="journal article" date="2000" name="Nature">
        <title>Sequence and analysis of chromosome 1 of the plant Arabidopsis thaliana.</title>
        <authorList>
            <person name="Theologis A."/>
            <person name="Ecker J.R."/>
            <person name="Palm C.J."/>
            <person name="Federspiel N.A."/>
            <person name="Kaul S."/>
            <person name="White O."/>
            <person name="Alonso J."/>
            <person name="Altafi H."/>
            <person name="Araujo R."/>
            <person name="Bowman C.L."/>
            <person name="Brooks S.Y."/>
            <person name="Buehler E."/>
            <person name="Chan A."/>
            <person name="Chao Q."/>
            <person name="Chen H."/>
            <person name="Cheuk R.F."/>
            <person name="Chin C.W."/>
            <person name="Chung M.K."/>
            <person name="Conn L."/>
            <person name="Conway A.B."/>
            <person name="Conway A.R."/>
            <person name="Creasy T.H."/>
            <person name="Dewar K."/>
            <person name="Dunn P."/>
            <person name="Etgu P."/>
            <person name="Feldblyum T.V."/>
            <person name="Feng J.-D."/>
            <person name="Fong B."/>
            <person name="Fujii C.Y."/>
            <person name="Gill J.E."/>
            <person name="Goldsmith A.D."/>
            <person name="Haas B."/>
            <person name="Hansen N.F."/>
            <person name="Hughes B."/>
            <person name="Huizar L."/>
            <person name="Hunter J.L."/>
            <person name="Jenkins J."/>
            <person name="Johnson-Hopson C."/>
            <person name="Khan S."/>
            <person name="Khaykin E."/>
            <person name="Kim C.J."/>
            <person name="Koo H.L."/>
            <person name="Kremenetskaia I."/>
            <person name="Kurtz D.B."/>
            <person name="Kwan A."/>
            <person name="Lam B."/>
            <person name="Langin-Hooper S."/>
            <person name="Lee A."/>
            <person name="Lee J.M."/>
            <person name="Lenz C.A."/>
            <person name="Li J.H."/>
            <person name="Li Y.-P."/>
            <person name="Lin X."/>
            <person name="Liu S.X."/>
            <person name="Liu Z.A."/>
            <person name="Luros J.S."/>
            <person name="Maiti R."/>
            <person name="Marziali A."/>
            <person name="Militscher J."/>
            <person name="Miranda M."/>
            <person name="Nguyen M."/>
            <person name="Nierman W.C."/>
            <person name="Osborne B.I."/>
            <person name="Pai G."/>
            <person name="Peterson J."/>
            <person name="Pham P.K."/>
            <person name="Rizzo M."/>
            <person name="Rooney T."/>
            <person name="Rowley D."/>
            <person name="Sakano H."/>
            <person name="Salzberg S.L."/>
            <person name="Schwartz J.R."/>
            <person name="Shinn P."/>
            <person name="Southwick A.M."/>
            <person name="Sun H."/>
            <person name="Tallon L.J."/>
            <person name="Tambunga G."/>
            <person name="Toriumi M.J."/>
            <person name="Town C.D."/>
            <person name="Utterback T."/>
            <person name="Van Aken S."/>
            <person name="Vaysberg M."/>
            <person name="Vysotskaia V.S."/>
            <person name="Walker M."/>
            <person name="Wu D."/>
            <person name="Yu G."/>
            <person name="Fraser C.M."/>
            <person name="Venter J.C."/>
            <person name="Davis R.W."/>
        </authorList>
    </citation>
    <scope>NUCLEOTIDE SEQUENCE [LARGE SCALE GENOMIC DNA]</scope>
    <source>
        <strain>cv. Columbia</strain>
    </source>
</reference>
<reference key="2">
    <citation type="journal article" date="2017" name="Plant J.">
        <title>Araport11: a complete reannotation of the Arabidopsis thaliana reference genome.</title>
        <authorList>
            <person name="Cheng C.Y."/>
            <person name="Krishnakumar V."/>
            <person name="Chan A.P."/>
            <person name="Thibaud-Nissen F."/>
            <person name="Schobel S."/>
            <person name="Town C.D."/>
        </authorList>
    </citation>
    <scope>GENOME REANNOTATION</scope>
    <source>
        <strain>cv. Columbia</strain>
    </source>
</reference>
<reference key="3">
    <citation type="journal article" date="2003" name="Science">
        <title>Empirical analysis of transcriptional activity in the Arabidopsis genome.</title>
        <authorList>
            <person name="Yamada K."/>
            <person name="Lim J."/>
            <person name="Dale J.M."/>
            <person name="Chen H."/>
            <person name="Shinn P."/>
            <person name="Palm C.J."/>
            <person name="Southwick A.M."/>
            <person name="Wu H.C."/>
            <person name="Kim C.J."/>
            <person name="Nguyen M."/>
            <person name="Pham P.K."/>
            <person name="Cheuk R.F."/>
            <person name="Karlin-Newmann G."/>
            <person name="Liu S.X."/>
            <person name="Lam B."/>
            <person name="Sakano H."/>
            <person name="Wu T."/>
            <person name="Yu G."/>
            <person name="Miranda M."/>
            <person name="Quach H.L."/>
            <person name="Tripp M."/>
            <person name="Chang C.H."/>
            <person name="Lee J.M."/>
            <person name="Toriumi M.J."/>
            <person name="Chan M.M."/>
            <person name="Tang C.C."/>
            <person name="Onodera C.S."/>
            <person name="Deng J.M."/>
            <person name="Akiyama K."/>
            <person name="Ansari Y."/>
            <person name="Arakawa T."/>
            <person name="Banh J."/>
            <person name="Banno F."/>
            <person name="Bowser L."/>
            <person name="Brooks S.Y."/>
            <person name="Carninci P."/>
            <person name="Chao Q."/>
            <person name="Choy N."/>
            <person name="Enju A."/>
            <person name="Goldsmith A.D."/>
            <person name="Gurjal M."/>
            <person name="Hansen N.F."/>
            <person name="Hayashizaki Y."/>
            <person name="Johnson-Hopson C."/>
            <person name="Hsuan V.W."/>
            <person name="Iida K."/>
            <person name="Karnes M."/>
            <person name="Khan S."/>
            <person name="Koesema E."/>
            <person name="Ishida J."/>
            <person name="Jiang P.X."/>
            <person name="Jones T."/>
            <person name="Kawai J."/>
            <person name="Kamiya A."/>
            <person name="Meyers C."/>
            <person name="Nakajima M."/>
            <person name="Narusaka M."/>
            <person name="Seki M."/>
            <person name="Sakurai T."/>
            <person name="Satou M."/>
            <person name="Tamse R."/>
            <person name="Vaysberg M."/>
            <person name="Wallender E.K."/>
            <person name="Wong C."/>
            <person name="Yamamura Y."/>
            <person name="Yuan S."/>
            <person name="Shinozaki K."/>
            <person name="Davis R.W."/>
            <person name="Theologis A."/>
            <person name="Ecker J.R."/>
        </authorList>
    </citation>
    <scope>NUCLEOTIDE SEQUENCE [LARGE SCALE MRNA]</scope>
    <source>
        <strain>cv. Columbia</strain>
    </source>
</reference>
<reference key="4">
    <citation type="journal article" date="2004" name="Plant Physiol.">
        <title>Patellin1, a novel Sec14-like protein, localizes to the cell plate and binds phosphoinositides.</title>
        <authorList>
            <person name="Peterman T.K."/>
            <person name="Ohol Y.M."/>
            <person name="McReynolds L.J."/>
            <person name="Luna E.J."/>
        </authorList>
    </citation>
    <scope>GENE FAMILY</scope>
    <scope>NOMENCLATURE</scope>
</reference>
<reference key="5">
    <citation type="journal article" date="2008" name="J. Proteome Res.">
        <title>Site-specific phosphorylation profiling of Arabidopsis proteins by mass spectrometry and peptide chip analysis.</title>
        <authorList>
            <person name="de la Fuente van Bentem S."/>
            <person name="Anrather D."/>
            <person name="Dohnal I."/>
            <person name="Roitinger E."/>
            <person name="Csaszar E."/>
            <person name="Joore J."/>
            <person name="Buijnink J."/>
            <person name="Carreri A."/>
            <person name="Forzani C."/>
            <person name="Lorkovic Z.J."/>
            <person name="Barta A."/>
            <person name="Lecourieux D."/>
            <person name="Verhounig A."/>
            <person name="Jonak C."/>
            <person name="Hirt H."/>
        </authorList>
    </citation>
    <scope>PHOSPHORYLATION [LARGE SCALE ANALYSIS] AT SER-53</scope>
    <scope>IDENTIFICATION BY MASS SPECTROMETRY [LARGE SCALE ANALYSIS]</scope>
    <source>
        <tissue>Root</tissue>
    </source>
</reference>
<reference key="6">
    <citation type="journal article" date="2009" name="J. Proteomics">
        <title>Phosphoproteomic analysis of nuclei-enriched fractions from Arabidopsis thaliana.</title>
        <authorList>
            <person name="Jones A.M.E."/>
            <person name="MacLean D."/>
            <person name="Studholme D.J."/>
            <person name="Serna-Sanz A."/>
            <person name="Andreasson E."/>
            <person name="Rathjen J.P."/>
            <person name="Peck S.C."/>
        </authorList>
    </citation>
    <scope>IDENTIFICATION BY MASS SPECTROMETRY [LARGE SCALE ANALYSIS]</scope>
    <source>
        <strain>cv. Columbia</strain>
    </source>
</reference>
<reference key="7">
    <citation type="journal article" date="2009" name="Plant Physiol.">
        <title>Large-scale Arabidopsis phosphoproteome profiling reveals novel chloroplast kinase substrates and phosphorylation networks.</title>
        <authorList>
            <person name="Reiland S."/>
            <person name="Messerli G."/>
            <person name="Baerenfaller K."/>
            <person name="Gerrits B."/>
            <person name="Endler A."/>
            <person name="Grossmann J."/>
            <person name="Gruissem W."/>
            <person name="Baginsky S."/>
        </authorList>
    </citation>
    <scope>IDENTIFICATION BY MASS SPECTROMETRY [LARGE SCALE ANALYSIS]</scope>
</reference>
<keyword id="KW-0131">Cell cycle</keyword>
<keyword id="KW-0132">Cell division</keyword>
<keyword id="KW-0175">Coiled coil</keyword>
<keyword id="KW-0963">Cytoplasm</keyword>
<keyword id="KW-1017">Isopeptide bond</keyword>
<keyword id="KW-0446">Lipid-binding</keyword>
<keyword id="KW-0472">Membrane</keyword>
<keyword id="KW-0597">Phosphoprotein</keyword>
<keyword id="KW-1185">Reference proteome</keyword>
<keyword id="KW-0813">Transport</keyword>
<keyword id="KW-0832">Ubl conjugation</keyword>
<comment type="function">
    <text evidence="1">Carrier protein that may be involved in membrane-trafficking events associated with cell plate formation during cytokinesis. Binds to some hydrophobic molecules such as phosphoinositides and promotes their transfer between the different cellular sites (By similarity).</text>
</comment>
<comment type="subcellular location">
    <subcellularLocation>
        <location evidence="1">Membrane</location>
        <topology evidence="1">Peripheral membrane protein</topology>
    </subcellularLocation>
    <subcellularLocation>
        <location evidence="1">Cytoplasm</location>
    </subcellularLocation>
    <text evidence="1">Mainly membrane-associated. Also cytoplasmic (By similarity).</text>
</comment>
<comment type="miscellaneous">
    <text>'Patella' means 'small plate' in Latin.</text>
</comment>
<comment type="similarity">
    <text evidence="7">Belongs to the patellin family.</text>
</comment>
<evidence type="ECO:0000250" key="1"/>
<evidence type="ECO:0000250" key="2">
    <source>
        <dbReference type="UniProtKB" id="Q56WK6"/>
    </source>
</evidence>
<evidence type="ECO:0000255" key="3"/>
<evidence type="ECO:0000255" key="4">
    <source>
        <dbReference type="PROSITE-ProRule" id="PRU00056"/>
    </source>
</evidence>
<evidence type="ECO:0000255" key="5">
    <source>
        <dbReference type="PROSITE-ProRule" id="PRU00096"/>
    </source>
</evidence>
<evidence type="ECO:0000256" key="6">
    <source>
        <dbReference type="SAM" id="MobiDB-lite"/>
    </source>
</evidence>
<evidence type="ECO:0000305" key="7"/>
<evidence type="ECO:0007744" key="8">
    <source>
    </source>
</evidence>
<organism>
    <name type="scientific">Arabidopsis thaliana</name>
    <name type="common">Mouse-ear cress</name>
    <dbReference type="NCBI Taxonomy" id="3702"/>
    <lineage>
        <taxon>Eukaryota</taxon>
        <taxon>Viridiplantae</taxon>
        <taxon>Streptophyta</taxon>
        <taxon>Embryophyta</taxon>
        <taxon>Tracheophyta</taxon>
        <taxon>Spermatophyta</taxon>
        <taxon>Magnoliopsida</taxon>
        <taxon>eudicotyledons</taxon>
        <taxon>Gunneridae</taxon>
        <taxon>Pentapetalae</taxon>
        <taxon>rosids</taxon>
        <taxon>malvids</taxon>
        <taxon>Brassicales</taxon>
        <taxon>Brassicaceae</taxon>
        <taxon>Camelineae</taxon>
        <taxon>Arabidopsis</taxon>
    </lineage>
</organism>
<dbReference type="EMBL" id="AC007060">
    <property type="protein sequence ID" value="AAD25756.1"/>
    <property type="molecule type" value="Genomic_DNA"/>
</dbReference>
<dbReference type="EMBL" id="CP002684">
    <property type="protein sequence ID" value="AEE31260.1"/>
    <property type="molecule type" value="Genomic_DNA"/>
</dbReference>
<dbReference type="EMBL" id="CP002684">
    <property type="protein sequence ID" value="AEE31261.1"/>
    <property type="molecule type" value="Genomic_DNA"/>
</dbReference>
<dbReference type="EMBL" id="AY035162">
    <property type="protein sequence ID" value="AAK59666.1"/>
    <property type="molecule type" value="mRNA"/>
</dbReference>
<dbReference type="EMBL" id="BT000959">
    <property type="protein sequence ID" value="AAN41359.1"/>
    <property type="molecule type" value="mRNA"/>
</dbReference>
<dbReference type="PIR" id="D86432">
    <property type="entry name" value="D86432"/>
</dbReference>
<dbReference type="RefSeq" id="NP_001031119.1">
    <property type="nucleotide sequence ID" value="NM_001036042.3"/>
</dbReference>
<dbReference type="RefSeq" id="NP_564360.1">
    <property type="nucleotide sequence ID" value="NM_102805.3"/>
</dbReference>
<dbReference type="SMR" id="Q94C59"/>
<dbReference type="BioGRID" id="25184">
    <property type="interactions" value="9"/>
</dbReference>
<dbReference type="FunCoup" id="Q94C59">
    <property type="interactions" value="1190"/>
</dbReference>
<dbReference type="IntAct" id="Q94C59">
    <property type="interactions" value="1"/>
</dbReference>
<dbReference type="STRING" id="3702.Q94C59"/>
<dbReference type="iPTMnet" id="Q94C59"/>
<dbReference type="PaxDb" id="3702-AT1G30690.2"/>
<dbReference type="ProteomicsDB" id="236355"/>
<dbReference type="EnsemblPlants" id="AT1G30690.1">
    <property type="protein sequence ID" value="AT1G30690.1"/>
    <property type="gene ID" value="AT1G30690"/>
</dbReference>
<dbReference type="EnsemblPlants" id="AT1G30690.2">
    <property type="protein sequence ID" value="AT1G30690.2"/>
    <property type="gene ID" value="AT1G30690"/>
</dbReference>
<dbReference type="GeneID" id="839949"/>
<dbReference type="Gramene" id="AT1G30690.1">
    <property type="protein sequence ID" value="AT1G30690.1"/>
    <property type="gene ID" value="AT1G30690"/>
</dbReference>
<dbReference type="Gramene" id="AT1G30690.2">
    <property type="protein sequence ID" value="AT1G30690.2"/>
    <property type="gene ID" value="AT1G30690"/>
</dbReference>
<dbReference type="KEGG" id="ath:AT1G30690"/>
<dbReference type="Araport" id="AT1G30690"/>
<dbReference type="TAIR" id="AT1G30690">
    <property type="gene designation" value="PATL4"/>
</dbReference>
<dbReference type="eggNOG" id="KOG1471">
    <property type="taxonomic scope" value="Eukaryota"/>
</dbReference>
<dbReference type="HOGENOM" id="CLU_023762_1_0_1"/>
<dbReference type="InParanoid" id="Q94C59"/>
<dbReference type="OMA" id="FINAPFW"/>
<dbReference type="PhylomeDB" id="Q94C59"/>
<dbReference type="PRO" id="PR:Q94C59"/>
<dbReference type="Proteomes" id="UP000006548">
    <property type="component" value="Chromosome 1"/>
</dbReference>
<dbReference type="ExpressionAtlas" id="Q94C59">
    <property type="expression patterns" value="baseline and differential"/>
</dbReference>
<dbReference type="GO" id="GO:0005829">
    <property type="term" value="C:cytosol"/>
    <property type="evidence" value="ECO:0007005"/>
    <property type="project" value="TAIR"/>
</dbReference>
<dbReference type="GO" id="GO:0005634">
    <property type="term" value="C:nucleus"/>
    <property type="evidence" value="ECO:0007005"/>
    <property type="project" value="TAIR"/>
</dbReference>
<dbReference type="GO" id="GO:0005886">
    <property type="term" value="C:plasma membrane"/>
    <property type="evidence" value="ECO:0007005"/>
    <property type="project" value="TAIR"/>
</dbReference>
<dbReference type="GO" id="GO:0008289">
    <property type="term" value="F:lipid binding"/>
    <property type="evidence" value="ECO:0007669"/>
    <property type="project" value="UniProtKB-KW"/>
</dbReference>
<dbReference type="GO" id="GO:0051301">
    <property type="term" value="P:cell division"/>
    <property type="evidence" value="ECO:0007669"/>
    <property type="project" value="UniProtKB-KW"/>
</dbReference>
<dbReference type="GO" id="GO:0071365">
    <property type="term" value="P:cellular response to auxin stimulus"/>
    <property type="evidence" value="ECO:0000316"/>
    <property type="project" value="TAIR"/>
</dbReference>
<dbReference type="GO" id="GO:1901703">
    <property type="term" value="P:protein localization involved in auxin polar transport"/>
    <property type="evidence" value="ECO:0000316"/>
    <property type="project" value="TAIR"/>
</dbReference>
<dbReference type="CDD" id="cd00170">
    <property type="entry name" value="SEC14"/>
    <property type="match status" value="1"/>
</dbReference>
<dbReference type="Gene3D" id="3.40.525.10">
    <property type="entry name" value="CRAL-TRIO lipid binding domain"/>
    <property type="match status" value="1"/>
</dbReference>
<dbReference type="Gene3D" id="2.60.120.680">
    <property type="entry name" value="GOLD domain"/>
    <property type="match status" value="1"/>
</dbReference>
<dbReference type="InterPro" id="IPR001251">
    <property type="entry name" value="CRAL-TRIO_dom"/>
</dbReference>
<dbReference type="InterPro" id="IPR036865">
    <property type="entry name" value="CRAL-TRIO_dom_sf"/>
</dbReference>
<dbReference type="InterPro" id="IPR011074">
    <property type="entry name" value="CRAL/TRIO_N_dom"/>
</dbReference>
<dbReference type="InterPro" id="IPR036273">
    <property type="entry name" value="CRAL/TRIO_N_dom_sf"/>
</dbReference>
<dbReference type="InterPro" id="IPR009038">
    <property type="entry name" value="GOLD_dom"/>
</dbReference>
<dbReference type="InterPro" id="IPR044834">
    <property type="entry name" value="PATL"/>
</dbReference>
<dbReference type="InterPro" id="IPR056794">
    <property type="entry name" value="PATL1-6_C_GOLD"/>
</dbReference>
<dbReference type="PANTHER" id="PTHR45932">
    <property type="entry name" value="PATELLIN-1"/>
    <property type="match status" value="1"/>
</dbReference>
<dbReference type="PANTHER" id="PTHR45932:SF2">
    <property type="entry name" value="PATELLIN-4"/>
    <property type="match status" value="1"/>
</dbReference>
<dbReference type="Pfam" id="PF00650">
    <property type="entry name" value="CRAL_TRIO"/>
    <property type="match status" value="1"/>
</dbReference>
<dbReference type="Pfam" id="PF03765">
    <property type="entry name" value="CRAL_TRIO_N"/>
    <property type="match status" value="1"/>
</dbReference>
<dbReference type="Pfam" id="PF25099">
    <property type="entry name" value="GOLD_PATL1_C"/>
    <property type="match status" value="1"/>
</dbReference>
<dbReference type="PRINTS" id="PR00180">
    <property type="entry name" value="CRETINALDHBP"/>
</dbReference>
<dbReference type="SMART" id="SM01100">
    <property type="entry name" value="CRAL_TRIO_N"/>
    <property type="match status" value="1"/>
</dbReference>
<dbReference type="SMART" id="SM00516">
    <property type="entry name" value="SEC14"/>
    <property type="match status" value="1"/>
</dbReference>
<dbReference type="SUPFAM" id="SSF52087">
    <property type="entry name" value="CRAL/TRIO domain"/>
    <property type="match status" value="1"/>
</dbReference>
<dbReference type="SUPFAM" id="SSF46938">
    <property type="entry name" value="CRAL/TRIO N-terminal domain"/>
    <property type="match status" value="1"/>
</dbReference>
<dbReference type="PROSITE" id="PS50191">
    <property type="entry name" value="CRAL_TRIO"/>
    <property type="match status" value="1"/>
</dbReference>
<dbReference type="PROSITE" id="PS50866">
    <property type="entry name" value="GOLD"/>
    <property type="match status" value="1"/>
</dbReference>
<feature type="chain" id="PRO_0000215588" description="Patellin-4">
    <location>
        <begin position="1"/>
        <end position="540"/>
    </location>
</feature>
<feature type="domain" description="CRAL-TRIO" evidence="4">
    <location>
        <begin position="258"/>
        <end position="428"/>
    </location>
</feature>
<feature type="domain" description="GOLD" evidence="5">
    <location>
        <begin position="433"/>
        <end position="534"/>
    </location>
</feature>
<feature type="region of interest" description="Disordered" evidence="6">
    <location>
        <begin position="89"/>
        <end position="140"/>
    </location>
</feature>
<feature type="coiled-coil region" evidence="3">
    <location>
        <begin position="61"/>
        <end position="183"/>
    </location>
</feature>
<feature type="compositionally biased region" description="Basic and acidic residues" evidence="6">
    <location>
        <begin position="94"/>
        <end position="140"/>
    </location>
</feature>
<feature type="modified residue" description="Phosphoserine" evidence="8">
    <location>
        <position position="53"/>
    </location>
</feature>
<feature type="cross-link" description="Glycyl lysine isopeptide (Lys-Gly) (interchain with G-Cter in ubiquitin)" evidence="2">
    <location>
        <position position="249"/>
    </location>
</feature>
<feature type="sequence conflict" description="In Ref. 3; AAK59666." evidence="7" ref="3">
    <original>H</original>
    <variation>N</variation>
    <location>
        <position position="286"/>
    </location>
</feature>
<name>PATL4_ARATH</name>
<protein>
    <recommendedName>
        <fullName>Patellin-4</fullName>
    </recommendedName>
</protein>